<proteinExistence type="inferred from homology"/>
<feature type="chain" id="PRO_0000335164" description="DNA mismatch repair protein MutS">
    <location>
        <begin position="1"/>
        <end position="859"/>
    </location>
</feature>
<feature type="binding site" evidence="1">
    <location>
        <begin position="614"/>
        <end position="621"/>
    </location>
    <ligand>
        <name>ATP</name>
        <dbReference type="ChEBI" id="CHEBI:30616"/>
    </ligand>
</feature>
<comment type="function">
    <text evidence="1">This protein is involved in the repair of mismatches in DNA. It is possible that it carries out the mismatch recognition step. This protein has a weak ATPase activity.</text>
</comment>
<comment type="similarity">
    <text evidence="1">Belongs to the DNA mismatch repair MutS family.</text>
</comment>
<dbReference type="EMBL" id="CP000947">
    <property type="protein sequence ID" value="ACA31684.1"/>
    <property type="molecule type" value="Genomic_DNA"/>
</dbReference>
<dbReference type="SMR" id="B0UWV7"/>
<dbReference type="STRING" id="228400.HSM_1896"/>
<dbReference type="KEGG" id="hsm:HSM_1896"/>
<dbReference type="HOGENOM" id="CLU_002472_4_0_6"/>
<dbReference type="GO" id="GO:0005829">
    <property type="term" value="C:cytosol"/>
    <property type="evidence" value="ECO:0007669"/>
    <property type="project" value="TreeGrafter"/>
</dbReference>
<dbReference type="GO" id="GO:0005524">
    <property type="term" value="F:ATP binding"/>
    <property type="evidence" value="ECO:0007669"/>
    <property type="project" value="UniProtKB-UniRule"/>
</dbReference>
<dbReference type="GO" id="GO:0140664">
    <property type="term" value="F:ATP-dependent DNA damage sensor activity"/>
    <property type="evidence" value="ECO:0007669"/>
    <property type="project" value="InterPro"/>
</dbReference>
<dbReference type="GO" id="GO:0003684">
    <property type="term" value="F:damaged DNA binding"/>
    <property type="evidence" value="ECO:0007669"/>
    <property type="project" value="UniProtKB-UniRule"/>
</dbReference>
<dbReference type="GO" id="GO:0030983">
    <property type="term" value="F:mismatched DNA binding"/>
    <property type="evidence" value="ECO:0007669"/>
    <property type="project" value="InterPro"/>
</dbReference>
<dbReference type="GO" id="GO:0006298">
    <property type="term" value="P:mismatch repair"/>
    <property type="evidence" value="ECO:0007669"/>
    <property type="project" value="UniProtKB-UniRule"/>
</dbReference>
<dbReference type="CDD" id="cd03284">
    <property type="entry name" value="ABC_MutS1"/>
    <property type="match status" value="1"/>
</dbReference>
<dbReference type="FunFam" id="1.10.1420.10:FF:000002">
    <property type="entry name" value="DNA mismatch repair protein MutS"/>
    <property type="match status" value="1"/>
</dbReference>
<dbReference type="FunFam" id="3.40.1170.10:FF:000001">
    <property type="entry name" value="DNA mismatch repair protein MutS"/>
    <property type="match status" value="1"/>
</dbReference>
<dbReference type="FunFam" id="3.40.50.300:FF:000283">
    <property type="entry name" value="DNA mismatch repair protein MutS"/>
    <property type="match status" value="1"/>
</dbReference>
<dbReference type="Gene3D" id="1.10.1420.10">
    <property type="match status" value="2"/>
</dbReference>
<dbReference type="Gene3D" id="6.10.140.430">
    <property type="match status" value="1"/>
</dbReference>
<dbReference type="Gene3D" id="3.40.1170.10">
    <property type="entry name" value="DNA repair protein MutS, domain I"/>
    <property type="match status" value="1"/>
</dbReference>
<dbReference type="Gene3D" id="3.30.420.110">
    <property type="entry name" value="MutS, connector domain"/>
    <property type="match status" value="1"/>
</dbReference>
<dbReference type="Gene3D" id="3.40.50.300">
    <property type="entry name" value="P-loop containing nucleotide triphosphate hydrolases"/>
    <property type="match status" value="1"/>
</dbReference>
<dbReference type="HAMAP" id="MF_00096">
    <property type="entry name" value="MutS"/>
    <property type="match status" value="1"/>
</dbReference>
<dbReference type="InterPro" id="IPR005748">
    <property type="entry name" value="DNA_mismatch_repair_MutS"/>
</dbReference>
<dbReference type="InterPro" id="IPR007695">
    <property type="entry name" value="DNA_mismatch_repair_MutS-lik_N"/>
</dbReference>
<dbReference type="InterPro" id="IPR017261">
    <property type="entry name" value="DNA_mismatch_repair_MutS/MSH"/>
</dbReference>
<dbReference type="InterPro" id="IPR000432">
    <property type="entry name" value="DNA_mismatch_repair_MutS_C"/>
</dbReference>
<dbReference type="InterPro" id="IPR007861">
    <property type="entry name" value="DNA_mismatch_repair_MutS_clamp"/>
</dbReference>
<dbReference type="InterPro" id="IPR007696">
    <property type="entry name" value="DNA_mismatch_repair_MutS_core"/>
</dbReference>
<dbReference type="InterPro" id="IPR016151">
    <property type="entry name" value="DNA_mismatch_repair_MutS_N"/>
</dbReference>
<dbReference type="InterPro" id="IPR036187">
    <property type="entry name" value="DNA_mismatch_repair_MutS_sf"/>
</dbReference>
<dbReference type="InterPro" id="IPR007860">
    <property type="entry name" value="DNA_mmatch_repair_MutS_con_dom"/>
</dbReference>
<dbReference type="InterPro" id="IPR045076">
    <property type="entry name" value="MutS"/>
</dbReference>
<dbReference type="InterPro" id="IPR036678">
    <property type="entry name" value="MutS_con_dom_sf"/>
</dbReference>
<dbReference type="InterPro" id="IPR027417">
    <property type="entry name" value="P-loop_NTPase"/>
</dbReference>
<dbReference type="NCBIfam" id="TIGR01070">
    <property type="entry name" value="mutS1"/>
    <property type="match status" value="1"/>
</dbReference>
<dbReference type="NCBIfam" id="NF003810">
    <property type="entry name" value="PRK05399.1"/>
    <property type="match status" value="1"/>
</dbReference>
<dbReference type="PANTHER" id="PTHR11361:SF34">
    <property type="entry name" value="DNA MISMATCH REPAIR PROTEIN MSH1, MITOCHONDRIAL"/>
    <property type="match status" value="1"/>
</dbReference>
<dbReference type="PANTHER" id="PTHR11361">
    <property type="entry name" value="DNA MISMATCH REPAIR PROTEIN MUTS FAMILY MEMBER"/>
    <property type="match status" value="1"/>
</dbReference>
<dbReference type="Pfam" id="PF01624">
    <property type="entry name" value="MutS_I"/>
    <property type="match status" value="1"/>
</dbReference>
<dbReference type="Pfam" id="PF05188">
    <property type="entry name" value="MutS_II"/>
    <property type="match status" value="1"/>
</dbReference>
<dbReference type="Pfam" id="PF05192">
    <property type="entry name" value="MutS_III"/>
    <property type="match status" value="1"/>
</dbReference>
<dbReference type="Pfam" id="PF05190">
    <property type="entry name" value="MutS_IV"/>
    <property type="match status" value="1"/>
</dbReference>
<dbReference type="Pfam" id="PF00488">
    <property type="entry name" value="MutS_V"/>
    <property type="match status" value="1"/>
</dbReference>
<dbReference type="PIRSF" id="PIRSF037677">
    <property type="entry name" value="DNA_mis_repair_Msh6"/>
    <property type="match status" value="1"/>
</dbReference>
<dbReference type="SMART" id="SM00534">
    <property type="entry name" value="MUTSac"/>
    <property type="match status" value="1"/>
</dbReference>
<dbReference type="SMART" id="SM00533">
    <property type="entry name" value="MUTSd"/>
    <property type="match status" value="1"/>
</dbReference>
<dbReference type="SUPFAM" id="SSF55271">
    <property type="entry name" value="DNA repair protein MutS, domain I"/>
    <property type="match status" value="1"/>
</dbReference>
<dbReference type="SUPFAM" id="SSF53150">
    <property type="entry name" value="DNA repair protein MutS, domain II"/>
    <property type="match status" value="1"/>
</dbReference>
<dbReference type="SUPFAM" id="SSF48334">
    <property type="entry name" value="DNA repair protein MutS, domain III"/>
    <property type="match status" value="1"/>
</dbReference>
<dbReference type="SUPFAM" id="SSF52540">
    <property type="entry name" value="P-loop containing nucleoside triphosphate hydrolases"/>
    <property type="match status" value="1"/>
</dbReference>
<dbReference type="PROSITE" id="PS00486">
    <property type="entry name" value="DNA_MISMATCH_REPAIR_2"/>
    <property type="match status" value="1"/>
</dbReference>
<name>MUTS_HISS2</name>
<organism>
    <name type="scientific">Histophilus somni (strain 2336)</name>
    <name type="common">Haemophilus somnus</name>
    <dbReference type="NCBI Taxonomy" id="228400"/>
    <lineage>
        <taxon>Bacteria</taxon>
        <taxon>Pseudomonadati</taxon>
        <taxon>Pseudomonadota</taxon>
        <taxon>Gammaproteobacteria</taxon>
        <taxon>Pasteurellales</taxon>
        <taxon>Pasteurellaceae</taxon>
        <taxon>Histophilus</taxon>
    </lineage>
</organism>
<evidence type="ECO:0000255" key="1">
    <source>
        <dbReference type="HAMAP-Rule" id="MF_00096"/>
    </source>
</evidence>
<protein>
    <recommendedName>
        <fullName evidence="1">DNA mismatch repair protein MutS</fullName>
    </recommendedName>
</protein>
<gene>
    <name evidence="1" type="primary">mutS</name>
    <name type="ordered locus">HSM_1896</name>
</gene>
<reference key="1">
    <citation type="submission" date="2008-02" db="EMBL/GenBank/DDBJ databases">
        <title>Complete sequence of Haemophilus somnus 2336.</title>
        <authorList>
            <consortium name="US DOE Joint Genome Institute"/>
            <person name="Siddaramappa S."/>
            <person name="Duncan A.J."/>
            <person name="Challacombe J.F."/>
            <person name="Rainey D."/>
            <person name="Gillaspy A.F."/>
            <person name="Carson M."/>
            <person name="Gipson J."/>
            <person name="Gipson M."/>
            <person name="Bruce D."/>
            <person name="Detter J.C."/>
            <person name="Han C.S."/>
            <person name="Land M."/>
            <person name="Tapia R."/>
            <person name="Thompson L.S."/>
            <person name="Orvis J."/>
            <person name="Zaitshik J."/>
            <person name="Barnes G."/>
            <person name="Brettin T.S."/>
            <person name="Dyer D.W."/>
            <person name="Inzana T.J."/>
        </authorList>
    </citation>
    <scope>NUCLEOTIDE SEQUENCE [LARGE SCALE GENOMIC DNA]</scope>
    <source>
        <strain>2336</strain>
    </source>
</reference>
<sequence>MKAMHTFENHTPMMKQYLKIKAENPDVLLFYRMGDFYELFYDDAKKAAELLDISLTKRGQSAGQPVPMAGVPYHAIEGYLAKLVQLGESVAICEQVGEPVIAKGPVERQVVRIVTPGTVSDEALLPEKQDNLIATIYQEKTQFGLAVLDMTSGCFQISELQDAASLQAELQRIQPVELLYSEALEDKHLIEQFKGLRRRPLWEFELSTAIQLLNRQFGTKDLRGFGVEKAVLGLCAAGCLLQYAKETQRTALPHIQSISLLQNSDTVQIDASTRRNLELTQNLAGGTENTLAAILDKCVTPMGSRLLKRWIHQPIRNIEKLQYRQQHIQMLLQQNLVEELQPLLRQVGDMERILARVALRSARPRDLTRLRTALEQIPFIQHQLTKIPHFVAFSQQIADFSVQLALLQRAIIDNPPLLIRDGGVIAEGYNEELDEWRSLSEGATRYLKDLEQRERANTGIDTLKIGFNAVHGYYIQISQGQAHKAPLHYVRRQTLKNVERYIIPELKTYEEKVLKAKGASLALEKQLYDEIFDQLLPHLGDLQLASLTLAELDVLTNLAERAETLNYVQPQFSTQVGLQIMQGRHPVVEQVLKEPFIANPVELNQKRHLLIITGPNMGGKSTYMRQTALITLMAYIGSFVPAESAVIGPIDRIFTRIGASDDLASGRSTFMVEMTEMANILHQATEQSLVLIDEIGRGTSTYDGLSLAWACAEQLAQKIRSLTLFATHYFELTGLPEKIEGIHNVHLDAFEHNDSIAFMHSVQEGAASKSYGLAVAALAGVPQNVIKSAKQKLKQLETLSQQNSYQSQSVLTQVQGELTLMEEEENTSAVIETLKTLDPNELSPKQALECLYQLKKMLN</sequence>
<keyword id="KW-0067">ATP-binding</keyword>
<keyword id="KW-0227">DNA damage</keyword>
<keyword id="KW-0234">DNA repair</keyword>
<keyword id="KW-0238">DNA-binding</keyword>
<keyword id="KW-0547">Nucleotide-binding</keyword>
<accession>B0UWV7</accession>